<evidence type="ECO:0000255" key="1"/>
<evidence type="ECO:0000255" key="2">
    <source>
        <dbReference type="PROSITE-ProRule" id="PRU00650"/>
    </source>
</evidence>
<evidence type="ECO:0000255" key="3">
    <source>
        <dbReference type="PROSITE-ProRule" id="PRU00768"/>
    </source>
</evidence>
<evidence type="ECO:0000256" key="4">
    <source>
        <dbReference type="SAM" id="MobiDB-lite"/>
    </source>
</evidence>
<evidence type="ECO:0000269" key="5">
    <source>
    </source>
</evidence>
<evidence type="ECO:0000269" key="6">
    <source>
    </source>
</evidence>
<evidence type="ECO:0000269" key="7">
    <source>
    </source>
</evidence>
<evidence type="ECO:0000269" key="8">
    <source>
    </source>
</evidence>
<evidence type="ECO:0000303" key="9">
    <source>
    </source>
</evidence>
<evidence type="ECO:0000303" key="10">
    <source>
    </source>
</evidence>
<evidence type="ECO:0000303" key="11">
    <source>
    </source>
</evidence>
<evidence type="ECO:0000305" key="12"/>
<evidence type="ECO:0000305" key="13">
    <source>
    </source>
</evidence>
<evidence type="ECO:0000312" key="14">
    <source>
        <dbReference type="EMBL" id="BAF16017.1"/>
    </source>
</evidence>
<evidence type="ECO:0000312" key="15">
    <source>
        <dbReference type="EMBL" id="CAE03550.1"/>
    </source>
</evidence>
<evidence type="ECO:0000312" key="16">
    <source>
        <dbReference type="EMBL" id="EAZ32236.1"/>
    </source>
</evidence>
<protein>
    <recommendedName>
        <fullName evidence="12">Protein TIFY 3</fullName>
        <shortName evidence="9">OsTIFY3</shortName>
    </recommendedName>
    <alternativeName>
        <fullName evidence="12">Jasmonate ZIM domain-containing protein 1</fullName>
        <shortName evidence="9">OsJAZ1</shortName>
    </alternativeName>
    <alternativeName>
        <fullName evidence="10">OsJAZ10</fullName>
    </alternativeName>
    <alternativeName>
        <fullName evidence="11">Protein EXTRA GLUME 2</fullName>
    </alternativeName>
</protein>
<sequence>MDLLEKKNIKKGGEVEEEVARKGEERKEEEVVVEEKSHQQQQQQGEEELVGLSLAGGRPKVFPMSSPPPNPSQLTIFYGGSVCVYDSVPPEKAQAIMLIAAAAAAAASATKSNAAIAVKPPVMPAANATQAAVSPVLTRSLSLQSTSVATGQPQVAADPSSICKLQADLPIARRHSLQRFLEKRRDRLVSKAPYPTKSSEGMEASGMEVTAEGKAQ</sequence>
<comment type="function">
    <text evidence="8">Repressor of jasmonate responses negatively regulated by the proteasome in an SCF(COI1) E3 ubiquitin-protein ligase complex-dependent manner. Involved in jasmonate (JA) signaling pathway during spikelet development. Targets directly the transcription activator MYC2 and suppresses the activity of MYC2 in triggering the transcription of MADS1 (PubMed:24647160).</text>
</comment>
<comment type="subunit">
    <text evidence="7 8">Interacts with COI1B in a coronatine-dependent manner. Coronatine is an analog of jasmonoyl isoleucine (JA-Ile) (PubMed:23320078, PubMed:24647160). Interacts with MYC2 (PubMed:24647160).</text>
</comment>
<comment type="subcellular location">
    <subcellularLocation>
        <location evidence="3">Nucleus</location>
    </subcellularLocation>
</comment>
<comment type="tissue specificity">
    <text evidence="8">Expressed in roots, stems, leaves, spikelets and seeds.</text>
</comment>
<comment type="induction">
    <text evidence="5 6 8">By abscisic acid (ABA), wounding, and drought and salt stresses (PubMed:19618278). Induced by jasmonate (JA) (PubMed:23104764). Negatively regulated by the SCF(COI1) E3 ubiquitin ligase-proteasome pathway during JA signaling (PubMed:24647160).</text>
</comment>
<comment type="domain">
    <text evidence="8">The jas domain (170-194) is required for interaction with COI1.</text>
</comment>
<comment type="PTM">
    <text evidence="8 13">Ubiquitinated (Probable). Increase in jasmonoyl isoleucine (JA-Ile) levels mediates its degradation via COI1B-mediated proteasome pathway (PubMed:24647160).</text>
</comment>
<comment type="similarity">
    <text evidence="12">Belongs to the TIFY/JAZ family.</text>
</comment>
<comment type="sequence caution" evidence="12">
    <conflict type="erroneous initiation">
        <sequence resource="EMBL-CDS" id="BAF16017"/>
    </conflict>
    <text>Truncated N-terminus.</text>
</comment>
<comment type="sequence caution" evidence="12">
    <conflict type="erroneous initiation">
        <sequence resource="EMBL-CDS" id="BAG86993"/>
    </conflict>
    <text>Truncated N-terminus.</text>
</comment>
<comment type="sequence caution" evidence="12">
    <conflict type="erroneous initiation">
        <sequence resource="EMBL-CDS" id="BAG86994"/>
    </conflict>
    <text>Truncated N-terminus.</text>
</comment>
<comment type="sequence caution" evidence="12">
    <conflict type="erroneous initiation">
        <sequence resource="EMBL-CDS" id="BAG91378"/>
    </conflict>
    <text>Truncated N-terminus.</text>
</comment>
<comment type="sequence caution" evidence="12">
    <conflict type="erroneous initiation">
        <sequence resource="EMBL-CDS" id="BAG91379"/>
    </conflict>
    <text>Truncated N-terminus.</text>
</comment>
<accession>Q7XPM8</accession>
<accession>B7E3P6</accession>
<accession>B7E3P7</accession>
<accession>Q0J9H0</accession>
<proteinExistence type="evidence at protein level"/>
<reference key="1">
    <citation type="journal article" date="2002" name="Nature">
        <title>Sequence and analysis of rice chromosome 4.</title>
        <authorList>
            <person name="Feng Q."/>
            <person name="Zhang Y."/>
            <person name="Hao P."/>
            <person name="Wang S."/>
            <person name="Fu G."/>
            <person name="Huang Y."/>
            <person name="Li Y."/>
            <person name="Zhu J."/>
            <person name="Liu Y."/>
            <person name="Hu X."/>
            <person name="Jia P."/>
            <person name="Zhang Y."/>
            <person name="Zhao Q."/>
            <person name="Ying K."/>
            <person name="Yu S."/>
            <person name="Tang Y."/>
            <person name="Weng Q."/>
            <person name="Zhang L."/>
            <person name="Lu Y."/>
            <person name="Mu J."/>
            <person name="Lu Y."/>
            <person name="Zhang L.S."/>
            <person name="Yu Z."/>
            <person name="Fan D."/>
            <person name="Liu X."/>
            <person name="Lu T."/>
            <person name="Li C."/>
            <person name="Wu Y."/>
            <person name="Sun T."/>
            <person name="Lei H."/>
            <person name="Li T."/>
            <person name="Hu H."/>
            <person name="Guan J."/>
            <person name="Wu M."/>
            <person name="Zhang R."/>
            <person name="Zhou B."/>
            <person name="Chen Z."/>
            <person name="Chen L."/>
            <person name="Jin Z."/>
            <person name="Wang R."/>
            <person name="Yin H."/>
            <person name="Cai Z."/>
            <person name="Ren S."/>
            <person name="Lv G."/>
            <person name="Gu W."/>
            <person name="Zhu G."/>
            <person name="Tu Y."/>
            <person name="Jia J."/>
            <person name="Zhang Y."/>
            <person name="Chen J."/>
            <person name="Kang H."/>
            <person name="Chen X."/>
            <person name="Shao C."/>
            <person name="Sun Y."/>
            <person name="Hu Q."/>
            <person name="Zhang X."/>
            <person name="Zhang W."/>
            <person name="Wang L."/>
            <person name="Ding C."/>
            <person name="Sheng H."/>
            <person name="Gu J."/>
            <person name="Chen S."/>
            <person name="Ni L."/>
            <person name="Zhu F."/>
            <person name="Chen W."/>
            <person name="Lan L."/>
            <person name="Lai Y."/>
            <person name="Cheng Z."/>
            <person name="Gu M."/>
            <person name="Jiang J."/>
            <person name="Li J."/>
            <person name="Hong G."/>
            <person name="Xue Y."/>
            <person name="Han B."/>
        </authorList>
    </citation>
    <scope>NUCLEOTIDE SEQUENCE [LARGE SCALE GENOMIC DNA]</scope>
    <source>
        <strain>cv. Nipponbare</strain>
    </source>
</reference>
<reference key="2">
    <citation type="journal article" date="2005" name="Nature">
        <title>The map-based sequence of the rice genome.</title>
        <authorList>
            <consortium name="International rice genome sequencing project (IRGSP)"/>
        </authorList>
    </citation>
    <scope>NUCLEOTIDE SEQUENCE [LARGE SCALE GENOMIC DNA]</scope>
    <source>
        <strain>cv. Nipponbare</strain>
    </source>
</reference>
<reference key="3">
    <citation type="journal article" date="2008" name="Nucleic Acids Res.">
        <title>The rice annotation project database (RAP-DB): 2008 update.</title>
        <authorList>
            <consortium name="The rice annotation project (RAP)"/>
        </authorList>
    </citation>
    <scope>GENOME REANNOTATION</scope>
    <source>
        <strain>cv. Nipponbare</strain>
    </source>
</reference>
<reference key="4">
    <citation type="journal article" date="2013" name="Rice">
        <title>Improvement of the Oryza sativa Nipponbare reference genome using next generation sequence and optical map data.</title>
        <authorList>
            <person name="Kawahara Y."/>
            <person name="de la Bastide M."/>
            <person name="Hamilton J.P."/>
            <person name="Kanamori H."/>
            <person name="McCombie W.R."/>
            <person name="Ouyang S."/>
            <person name="Schwartz D.C."/>
            <person name="Tanaka T."/>
            <person name="Wu J."/>
            <person name="Zhou S."/>
            <person name="Childs K.L."/>
            <person name="Davidson R.M."/>
            <person name="Lin H."/>
            <person name="Quesada-Ocampo L."/>
            <person name="Vaillancourt B."/>
            <person name="Sakai H."/>
            <person name="Lee S.S."/>
            <person name="Kim J."/>
            <person name="Numa H."/>
            <person name="Itoh T."/>
            <person name="Buell C.R."/>
            <person name="Matsumoto T."/>
        </authorList>
    </citation>
    <scope>GENOME REANNOTATION</scope>
    <source>
        <strain>cv. Nipponbare</strain>
    </source>
</reference>
<reference key="5">
    <citation type="journal article" date="2005" name="PLoS Biol.">
        <title>The genomes of Oryza sativa: a history of duplications.</title>
        <authorList>
            <person name="Yu J."/>
            <person name="Wang J."/>
            <person name="Lin W."/>
            <person name="Li S."/>
            <person name="Li H."/>
            <person name="Zhou J."/>
            <person name="Ni P."/>
            <person name="Dong W."/>
            <person name="Hu S."/>
            <person name="Zeng C."/>
            <person name="Zhang J."/>
            <person name="Zhang Y."/>
            <person name="Li R."/>
            <person name="Xu Z."/>
            <person name="Li S."/>
            <person name="Li X."/>
            <person name="Zheng H."/>
            <person name="Cong L."/>
            <person name="Lin L."/>
            <person name="Yin J."/>
            <person name="Geng J."/>
            <person name="Li G."/>
            <person name="Shi J."/>
            <person name="Liu J."/>
            <person name="Lv H."/>
            <person name="Li J."/>
            <person name="Wang J."/>
            <person name="Deng Y."/>
            <person name="Ran L."/>
            <person name="Shi X."/>
            <person name="Wang X."/>
            <person name="Wu Q."/>
            <person name="Li C."/>
            <person name="Ren X."/>
            <person name="Wang J."/>
            <person name="Wang X."/>
            <person name="Li D."/>
            <person name="Liu D."/>
            <person name="Zhang X."/>
            <person name="Ji Z."/>
            <person name="Zhao W."/>
            <person name="Sun Y."/>
            <person name="Zhang Z."/>
            <person name="Bao J."/>
            <person name="Han Y."/>
            <person name="Dong L."/>
            <person name="Ji J."/>
            <person name="Chen P."/>
            <person name="Wu S."/>
            <person name="Liu J."/>
            <person name="Xiao Y."/>
            <person name="Bu D."/>
            <person name="Tan J."/>
            <person name="Yang L."/>
            <person name="Ye C."/>
            <person name="Zhang J."/>
            <person name="Xu J."/>
            <person name="Zhou Y."/>
            <person name="Yu Y."/>
            <person name="Zhang B."/>
            <person name="Zhuang S."/>
            <person name="Wei H."/>
            <person name="Liu B."/>
            <person name="Lei M."/>
            <person name="Yu H."/>
            <person name="Li Y."/>
            <person name="Xu H."/>
            <person name="Wei S."/>
            <person name="He X."/>
            <person name="Fang L."/>
            <person name="Zhang Z."/>
            <person name="Zhang Y."/>
            <person name="Huang X."/>
            <person name="Su Z."/>
            <person name="Tong W."/>
            <person name="Li J."/>
            <person name="Tong Z."/>
            <person name="Li S."/>
            <person name="Ye J."/>
            <person name="Wang L."/>
            <person name="Fang L."/>
            <person name="Lei T."/>
            <person name="Chen C.-S."/>
            <person name="Chen H.-C."/>
            <person name="Xu Z."/>
            <person name="Li H."/>
            <person name="Huang H."/>
            <person name="Zhang F."/>
            <person name="Xu H."/>
            <person name="Li N."/>
            <person name="Zhao C."/>
            <person name="Li S."/>
            <person name="Dong L."/>
            <person name="Huang Y."/>
            <person name="Li L."/>
            <person name="Xi Y."/>
            <person name="Qi Q."/>
            <person name="Li W."/>
            <person name="Zhang B."/>
            <person name="Hu W."/>
            <person name="Zhang Y."/>
            <person name="Tian X."/>
            <person name="Jiao Y."/>
            <person name="Liang X."/>
            <person name="Jin J."/>
            <person name="Gao L."/>
            <person name="Zheng W."/>
            <person name="Hao B."/>
            <person name="Liu S.-M."/>
            <person name="Wang W."/>
            <person name="Yuan L."/>
            <person name="Cao M."/>
            <person name="McDermott J."/>
            <person name="Samudrala R."/>
            <person name="Wang J."/>
            <person name="Wong G.K.-S."/>
            <person name="Yang H."/>
        </authorList>
    </citation>
    <scope>NUCLEOTIDE SEQUENCE [LARGE SCALE GENOMIC DNA]</scope>
    <source>
        <strain>cv. Nipponbare</strain>
    </source>
</reference>
<reference key="6">
    <citation type="journal article" date="2003" name="Science">
        <title>Collection, mapping, and annotation of over 28,000 cDNA clones from japonica rice.</title>
        <authorList>
            <consortium name="The rice full-length cDNA consortium"/>
        </authorList>
    </citation>
    <scope>NUCLEOTIDE SEQUENCE [LARGE SCALE MRNA] OF 21-216</scope>
    <source>
        <strain>cv. Nipponbare</strain>
    </source>
</reference>
<reference key="7">
    <citation type="journal article" date="2009" name="Plant Mol. Biol.">
        <title>Identification and expression profiling analysis of TIFY family genes involved in stress and phytohormone responses in rice.</title>
        <authorList>
            <person name="Ye H."/>
            <person name="Du H."/>
            <person name="Tang N."/>
            <person name="Li X."/>
            <person name="Xiong L."/>
        </authorList>
    </citation>
    <scope>GENE FAMILY</scope>
    <scope>NOMENCLATURE</scope>
    <scope>INDUCTION</scope>
</reference>
<reference key="8">
    <citation type="journal article" date="2012" name="Plant Cell Physiol.">
        <title>Involvement of OsJAZ8 in jasmonate-induced resistance to bacterial blight in rice.</title>
        <authorList>
            <person name="Yamada S."/>
            <person name="Kano A."/>
            <person name="Tamaoki D."/>
            <person name="Miyamoto A."/>
            <person name="Shishido H."/>
            <person name="Miyoshi S."/>
            <person name="Taniguchi S."/>
            <person name="Akimitsu K."/>
            <person name="Gomi K."/>
        </authorList>
    </citation>
    <scope>INDUCTION BY JASMONATE</scope>
</reference>
<reference key="9">
    <citation type="journal article" date="2013" name="PLoS ONE">
        <title>Oryza sativa COI homologues restore jasmonate signal transduction in Arabidopsis coi1-1 mutants.</title>
        <authorList>
            <person name="Lee H.Y."/>
            <person name="Seo J.S."/>
            <person name="Cho J.H."/>
            <person name="Jung H."/>
            <person name="Kim J.K."/>
            <person name="Lee J.S."/>
            <person name="Rhee S."/>
            <person name="Do Choi Y."/>
        </authorList>
    </citation>
    <scope>INTERACTION WITH COI1B</scope>
</reference>
<reference key="10">
    <citation type="journal article" date="2014" name="Nat. Commun.">
        <title>Jasmonic acid regulates spikelet development in rice.</title>
        <authorList>
            <person name="Cai Q."/>
            <person name="Yuan Z."/>
            <person name="Chen M."/>
            <person name="Yin C."/>
            <person name="Luo Z."/>
            <person name="Zhao X."/>
            <person name="Liang W."/>
            <person name="Hu J."/>
            <person name="Zhang D."/>
        </authorList>
    </citation>
    <scope>FUNCTION</scope>
    <scope>INTERACTION WITH COI1B AND MYC2</scope>
    <scope>DOMAIN</scope>
    <scope>TISSUE SPECIFICITY</scope>
    <scope>PTM</scope>
    <scope>MUTAGENESIS OF ALA-172</scope>
</reference>
<organism>
    <name type="scientific">Oryza sativa subsp. japonica</name>
    <name type="common">Rice</name>
    <dbReference type="NCBI Taxonomy" id="39947"/>
    <lineage>
        <taxon>Eukaryota</taxon>
        <taxon>Viridiplantae</taxon>
        <taxon>Streptophyta</taxon>
        <taxon>Embryophyta</taxon>
        <taxon>Tracheophyta</taxon>
        <taxon>Spermatophyta</taxon>
        <taxon>Magnoliopsida</taxon>
        <taxon>Liliopsida</taxon>
        <taxon>Poales</taxon>
        <taxon>Poaceae</taxon>
        <taxon>BOP clade</taxon>
        <taxon>Oryzoideae</taxon>
        <taxon>Oryzeae</taxon>
        <taxon>Oryzinae</taxon>
        <taxon>Oryza</taxon>
        <taxon>Oryza sativa</taxon>
    </lineage>
</organism>
<feature type="chain" id="PRO_0000434839" description="Protein TIFY 3">
    <location>
        <begin position="1"/>
        <end position="216"/>
    </location>
</feature>
<feature type="domain" description="Tify" evidence="2">
    <location>
        <begin position="67"/>
        <end position="102"/>
    </location>
</feature>
<feature type="region of interest" description="Disordered" evidence="4">
    <location>
        <begin position="1"/>
        <end position="47"/>
    </location>
</feature>
<feature type="region of interest" description="Disordered" evidence="4">
    <location>
        <begin position="184"/>
        <end position="216"/>
    </location>
</feature>
<feature type="short sequence motif" description="Jas" evidence="1">
    <location>
        <begin position="170"/>
        <end position="194"/>
    </location>
</feature>
<feature type="short sequence motif" description="Nuclear localization signal" evidence="3">
    <location>
        <begin position="172"/>
        <end position="179"/>
    </location>
</feature>
<feature type="compositionally biased region" description="Basic and acidic residues" evidence="4">
    <location>
        <begin position="1"/>
        <end position="38"/>
    </location>
</feature>
<feature type="mutagenesis site" description="In eg2-1D; increased root length, extra glume-like structures and altered floral organ numbers and identities." evidence="8">
    <original>A</original>
    <variation>G</variation>
    <location>
        <position position="172"/>
    </location>
</feature>
<name>TIF3_ORYSJ</name>
<gene>
    <name evidence="9" type="primary">TIFY3</name>
    <name evidence="11" type="synonym">EG2</name>
    <name evidence="9" type="synonym">JAZ1</name>
    <name evidence="14" type="ordered locus">Os04g0653000</name>
    <name evidence="12" type="ordered locus">LOC_Os04g55920</name>
    <name evidence="16" type="ORF">OsJ_16440</name>
    <name evidence="15" type="ORF">OSJNBa0060D06.16</name>
</gene>
<keyword id="KW-1184">Jasmonic acid signaling pathway</keyword>
<keyword id="KW-0539">Nucleus</keyword>
<keyword id="KW-1185">Reference proteome</keyword>
<keyword id="KW-0804">Transcription</keyword>
<keyword id="KW-0805">Transcription regulation</keyword>
<keyword id="KW-0832">Ubl conjugation</keyword>
<dbReference type="EMBL" id="AL606690">
    <property type="protein sequence ID" value="CAE03550.1"/>
    <property type="molecule type" value="Genomic_DNA"/>
</dbReference>
<dbReference type="EMBL" id="AP008210">
    <property type="protein sequence ID" value="BAF16017.1"/>
    <property type="status" value="ALT_INIT"/>
    <property type="molecule type" value="Genomic_DNA"/>
</dbReference>
<dbReference type="EMBL" id="AP014960">
    <property type="status" value="NOT_ANNOTATED_CDS"/>
    <property type="molecule type" value="Genomic_DNA"/>
</dbReference>
<dbReference type="EMBL" id="CM000141">
    <property type="protein sequence ID" value="EAZ32236.1"/>
    <property type="molecule type" value="Genomic_DNA"/>
</dbReference>
<dbReference type="EMBL" id="AK059441">
    <property type="protein sequence ID" value="BAG86993.1"/>
    <property type="status" value="ALT_INIT"/>
    <property type="molecule type" value="mRNA"/>
</dbReference>
<dbReference type="EMBL" id="AK059441">
    <property type="protein sequence ID" value="BAG86994.1"/>
    <property type="status" value="ALT_INIT"/>
    <property type="molecule type" value="mRNA"/>
</dbReference>
<dbReference type="EMBL" id="AK069326">
    <property type="protein sequence ID" value="BAG91378.1"/>
    <property type="status" value="ALT_INIT"/>
    <property type="molecule type" value="mRNA"/>
</dbReference>
<dbReference type="EMBL" id="AK069326">
    <property type="protein sequence ID" value="BAG91379.1"/>
    <property type="status" value="ALT_INIT"/>
    <property type="molecule type" value="mRNA"/>
</dbReference>
<dbReference type="RefSeq" id="XP_015635690.1">
    <property type="nucleotide sequence ID" value="XM_015780204.1"/>
</dbReference>
<dbReference type="SMR" id="Q7XPM8"/>
<dbReference type="FunCoup" id="Q7XPM8">
    <property type="interactions" value="652"/>
</dbReference>
<dbReference type="STRING" id="39947.Q7XPM8"/>
<dbReference type="PaxDb" id="39947-Q7XPM8"/>
<dbReference type="EnsemblPlants" id="Os04t0653000-01">
    <property type="protein sequence ID" value="Os04t0653000-01"/>
    <property type="gene ID" value="Os04g0653000"/>
</dbReference>
<dbReference type="Gramene" id="Os04t0653000-01">
    <property type="protein sequence ID" value="Os04t0653000-01"/>
    <property type="gene ID" value="Os04g0653000"/>
</dbReference>
<dbReference type="KEGG" id="dosa:Os04g0653000"/>
<dbReference type="eggNOG" id="ENOG502S12Y">
    <property type="taxonomic scope" value="Eukaryota"/>
</dbReference>
<dbReference type="HOGENOM" id="CLU_088770_0_0_1"/>
<dbReference type="InParanoid" id="Q7XPM8"/>
<dbReference type="OrthoDB" id="649989at2759"/>
<dbReference type="PlantReactome" id="R-OSA-6787011">
    <property type="pathway name" value="Jasmonic acid signaling"/>
</dbReference>
<dbReference type="Proteomes" id="UP000000763">
    <property type="component" value="Chromosome 4"/>
</dbReference>
<dbReference type="Proteomes" id="UP000007752">
    <property type="component" value="Chromosome 4"/>
</dbReference>
<dbReference type="Proteomes" id="UP000059680">
    <property type="component" value="Chromosome 4"/>
</dbReference>
<dbReference type="GO" id="GO:0005634">
    <property type="term" value="C:nucleus"/>
    <property type="evidence" value="ECO:0000318"/>
    <property type="project" value="GO_Central"/>
</dbReference>
<dbReference type="GO" id="GO:0010582">
    <property type="term" value="P:floral meristem determinacy"/>
    <property type="evidence" value="ECO:0000315"/>
    <property type="project" value="UniProtKB"/>
</dbReference>
<dbReference type="GO" id="GO:0048449">
    <property type="term" value="P:floral organ formation"/>
    <property type="evidence" value="ECO:0000315"/>
    <property type="project" value="UniProtKB"/>
</dbReference>
<dbReference type="GO" id="GO:0031347">
    <property type="term" value="P:regulation of defense response"/>
    <property type="evidence" value="ECO:0000318"/>
    <property type="project" value="GO_Central"/>
</dbReference>
<dbReference type="GO" id="GO:2000022">
    <property type="term" value="P:regulation of jasmonic acid mediated signaling pathway"/>
    <property type="evidence" value="ECO:0000315"/>
    <property type="project" value="UniProtKB"/>
</dbReference>
<dbReference type="GO" id="GO:0009611">
    <property type="term" value="P:response to wounding"/>
    <property type="evidence" value="ECO:0000318"/>
    <property type="project" value="GO_Central"/>
</dbReference>
<dbReference type="InterPro" id="IPR018467">
    <property type="entry name" value="CCT_CS"/>
</dbReference>
<dbReference type="InterPro" id="IPR040390">
    <property type="entry name" value="TIFY/JAZ"/>
</dbReference>
<dbReference type="InterPro" id="IPR010399">
    <property type="entry name" value="Tify_dom"/>
</dbReference>
<dbReference type="PANTHER" id="PTHR33077:SF61">
    <property type="entry name" value="PROTEIN TIFY 3A-RELATED"/>
    <property type="match status" value="1"/>
</dbReference>
<dbReference type="PANTHER" id="PTHR33077">
    <property type="entry name" value="PROTEIN TIFY 4A-RELATED-RELATED"/>
    <property type="match status" value="1"/>
</dbReference>
<dbReference type="Pfam" id="PF09425">
    <property type="entry name" value="Jas_motif"/>
    <property type="match status" value="1"/>
</dbReference>
<dbReference type="Pfam" id="PF06200">
    <property type="entry name" value="tify"/>
    <property type="match status" value="1"/>
</dbReference>
<dbReference type="SMART" id="SM00979">
    <property type="entry name" value="TIFY"/>
    <property type="match status" value="1"/>
</dbReference>
<dbReference type="PROSITE" id="PS51320">
    <property type="entry name" value="TIFY"/>
    <property type="match status" value="1"/>
</dbReference>